<comment type="function">
    <text evidence="1">Involved in the binding of tRNA to the ribosomes.</text>
</comment>
<comment type="subunit">
    <text evidence="1">Part of the 30S ribosomal subunit.</text>
</comment>
<comment type="similarity">
    <text evidence="1">Belongs to the universal ribosomal protein uS10 family.</text>
</comment>
<accession>Q03PV6</accession>
<feature type="chain" id="PRO_1000015037" description="Small ribosomal subunit protein uS10">
    <location>
        <begin position="1"/>
        <end position="102"/>
    </location>
</feature>
<gene>
    <name evidence="1" type="primary">rpsJ</name>
    <name type="ordered locus">LVIS_1691</name>
</gene>
<keyword id="KW-1185">Reference proteome</keyword>
<keyword id="KW-0687">Ribonucleoprotein</keyword>
<keyword id="KW-0689">Ribosomal protein</keyword>
<name>RS10_LEVBA</name>
<organism>
    <name type="scientific">Levilactobacillus brevis (strain ATCC 367 / BCRC 12310 / CIP 105137 / JCM 1170 / LMG 11437 / NCIMB 947 / NCTC 947)</name>
    <name type="common">Lactobacillus brevis</name>
    <dbReference type="NCBI Taxonomy" id="387344"/>
    <lineage>
        <taxon>Bacteria</taxon>
        <taxon>Bacillati</taxon>
        <taxon>Bacillota</taxon>
        <taxon>Bacilli</taxon>
        <taxon>Lactobacillales</taxon>
        <taxon>Lactobacillaceae</taxon>
        <taxon>Levilactobacillus</taxon>
    </lineage>
</organism>
<dbReference type="EMBL" id="CP000416">
    <property type="protein sequence ID" value="ABJ64766.1"/>
    <property type="molecule type" value="Genomic_DNA"/>
</dbReference>
<dbReference type="RefSeq" id="WP_011668500.1">
    <property type="nucleotide sequence ID" value="NC_008497.1"/>
</dbReference>
<dbReference type="SMR" id="Q03PV6"/>
<dbReference type="STRING" id="387344.LVIS_1691"/>
<dbReference type="GeneID" id="56993552"/>
<dbReference type="KEGG" id="lbr:LVIS_1691"/>
<dbReference type="eggNOG" id="COG0051">
    <property type="taxonomic scope" value="Bacteria"/>
</dbReference>
<dbReference type="HOGENOM" id="CLU_122625_1_3_9"/>
<dbReference type="Proteomes" id="UP000001652">
    <property type="component" value="Chromosome"/>
</dbReference>
<dbReference type="GO" id="GO:1990904">
    <property type="term" value="C:ribonucleoprotein complex"/>
    <property type="evidence" value="ECO:0007669"/>
    <property type="project" value="UniProtKB-KW"/>
</dbReference>
<dbReference type="GO" id="GO:0005840">
    <property type="term" value="C:ribosome"/>
    <property type="evidence" value="ECO:0007669"/>
    <property type="project" value="UniProtKB-KW"/>
</dbReference>
<dbReference type="GO" id="GO:0003735">
    <property type="term" value="F:structural constituent of ribosome"/>
    <property type="evidence" value="ECO:0007669"/>
    <property type="project" value="InterPro"/>
</dbReference>
<dbReference type="GO" id="GO:0000049">
    <property type="term" value="F:tRNA binding"/>
    <property type="evidence" value="ECO:0007669"/>
    <property type="project" value="UniProtKB-UniRule"/>
</dbReference>
<dbReference type="GO" id="GO:0006412">
    <property type="term" value="P:translation"/>
    <property type="evidence" value="ECO:0007669"/>
    <property type="project" value="UniProtKB-UniRule"/>
</dbReference>
<dbReference type="FunFam" id="3.30.70.600:FF:000001">
    <property type="entry name" value="30S ribosomal protein S10"/>
    <property type="match status" value="1"/>
</dbReference>
<dbReference type="Gene3D" id="3.30.70.600">
    <property type="entry name" value="Ribosomal protein S10 domain"/>
    <property type="match status" value="1"/>
</dbReference>
<dbReference type="HAMAP" id="MF_00508">
    <property type="entry name" value="Ribosomal_uS10"/>
    <property type="match status" value="1"/>
</dbReference>
<dbReference type="InterPro" id="IPR001848">
    <property type="entry name" value="Ribosomal_uS10"/>
</dbReference>
<dbReference type="InterPro" id="IPR018268">
    <property type="entry name" value="Ribosomal_uS10_CS"/>
</dbReference>
<dbReference type="InterPro" id="IPR027486">
    <property type="entry name" value="Ribosomal_uS10_dom"/>
</dbReference>
<dbReference type="InterPro" id="IPR036838">
    <property type="entry name" value="Ribosomal_uS10_dom_sf"/>
</dbReference>
<dbReference type="NCBIfam" id="NF001861">
    <property type="entry name" value="PRK00596.1"/>
    <property type="match status" value="1"/>
</dbReference>
<dbReference type="NCBIfam" id="TIGR01049">
    <property type="entry name" value="rpsJ_bact"/>
    <property type="match status" value="1"/>
</dbReference>
<dbReference type="PANTHER" id="PTHR11700">
    <property type="entry name" value="30S RIBOSOMAL PROTEIN S10 FAMILY MEMBER"/>
    <property type="match status" value="1"/>
</dbReference>
<dbReference type="Pfam" id="PF00338">
    <property type="entry name" value="Ribosomal_S10"/>
    <property type="match status" value="1"/>
</dbReference>
<dbReference type="PRINTS" id="PR00971">
    <property type="entry name" value="RIBOSOMALS10"/>
</dbReference>
<dbReference type="SMART" id="SM01403">
    <property type="entry name" value="Ribosomal_S10"/>
    <property type="match status" value="1"/>
</dbReference>
<dbReference type="SUPFAM" id="SSF54999">
    <property type="entry name" value="Ribosomal protein S10"/>
    <property type="match status" value="1"/>
</dbReference>
<dbReference type="PROSITE" id="PS00361">
    <property type="entry name" value="RIBOSOMAL_S10"/>
    <property type="match status" value="1"/>
</dbReference>
<evidence type="ECO:0000255" key="1">
    <source>
        <dbReference type="HAMAP-Rule" id="MF_00508"/>
    </source>
</evidence>
<evidence type="ECO:0000305" key="2"/>
<sequence length="102" mass="11692">MAKQKIRIRLKAYEHRILDQSADKIVETAKRTGAGISGPIPLPTERTIYTVLRSPHKFKDSREQFEMRTHKRLIDIVNPTPKTVDSLMKLDLPSGVDIEIKL</sequence>
<protein>
    <recommendedName>
        <fullName evidence="1">Small ribosomal subunit protein uS10</fullName>
    </recommendedName>
    <alternativeName>
        <fullName evidence="2">30S ribosomal protein S10</fullName>
    </alternativeName>
</protein>
<reference key="1">
    <citation type="journal article" date="2006" name="Proc. Natl. Acad. Sci. U.S.A.">
        <title>Comparative genomics of the lactic acid bacteria.</title>
        <authorList>
            <person name="Makarova K.S."/>
            <person name="Slesarev A."/>
            <person name="Wolf Y.I."/>
            <person name="Sorokin A."/>
            <person name="Mirkin B."/>
            <person name="Koonin E.V."/>
            <person name="Pavlov A."/>
            <person name="Pavlova N."/>
            <person name="Karamychev V."/>
            <person name="Polouchine N."/>
            <person name="Shakhova V."/>
            <person name="Grigoriev I."/>
            <person name="Lou Y."/>
            <person name="Rohksar D."/>
            <person name="Lucas S."/>
            <person name="Huang K."/>
            <person name="Goodstein D.M."/>
            <person name="Hawkins T."/>
            <person name="Plengvidhya V."/>
            <person name="Welker D."/>
            <person name="Hughes J."/>
            <person name="Goh Y."/>
            <person name="Benson A."/>
            <person name="Baldwin K."/>
            <person name="Lee J.-H."/>
            <person name="Diaz-Muniz I."/>
            <person name="Dosti B."/>
            <person name="Smeianov V."/>
            <person name="Wechter W."/>
            <person name="Barabote R."/>
            <person name="Lorca G."/>
            <person name="Altermann E."/>
            <person name="Barrangou R."/>
            <person name="Ganesan B."/>
            <person name="Xie Y."/>
            <person name="Rawsthorne H."/>
            <person name="Tamir D."/>
            <person name="Parker C."/>
            <person name="Breidt F."/>
            <person name="Broadbent J.R."/>
            <person name="Hutkins R."/>
            <person name="O'Sullivan D."/>
            <person name="Steele J."/>
            <person name="Unlu G."/>
            <person name="Saier M.H. Jr."/>
            <person name="Klaenhammer T."/>
            <person name="Richardson P."/>
            <person name="Kozyavkin S."/>
            <person name="Weimer B.C."/>
            <person name="Mills D.A."/>
        </authorList>
    </citation>
    <scope>NUCLEOTIDE SEQUENCE [LARGE SCALE GENOMIC DNA]</scope>
    <source>
        <strain>ATCC 367 / BCRC 12310 / CIP 105137 / JCM 1170 / LMG 11437 / NCIMB 947 / NCTC 947</strain>
    </source>
</reference>
<proteinExistence type="inferred from homology"/>